<gene>
    <name evidence="1" type="primary">speH</name>
    <name type="ordered locus">HY04AAS1_0079</name>
</gene>
<keyword id="KW-0068">Autocatalytic cleavage</keyword>
<keyword id="KW-0210">Decarboxylase</keyword>
<keyword id="KW-0456">Lyase</keyword>
<keyword id="KW-0620">Polyamine biosynthesis</keyword>
<keyword id="KW-0670">Pyruvate</keyword>
<keyword id="KW-0949">S-adenosyl-L-methionine</keyword>
<keyword id="KW-0704">Schiff base</keyword>
<keyword id="KW-0745">Spermidine biosynthesis</keyword>
<keyword id="KW-0865">Zymogen</keyword>
<evidence type="ECO:0000255" key="1">
    <source>
        <dbReference type="HAMAP-Rule" id="MF_00464"/>
    </source>
</evidence>
<reference key="1">
    <citation type="journal article" date="2009" name="J. Bacteriol.">
        <title>Complete and draft genome sequences of six members of the Aquificales.</title>
        <authorList>
            <person name="Reysenbach A.-L."/>
            <person name="Hamamura N."/>
            <person name="Podar M."/>
            <person name="Griffiths E."/>
            <person name="Ferreira S."/>
            <person name="Hochstein R."/>
            <person name="Heidelberg J."/>
            <person name="Johnson J."/>
            <person name="Mead D."/>
            <person name="Pohorille A."/>
            <person name="Sarmiento M."/>
            <person name="Schweighofer K."/>
            <person name="Seshadri R."/>
            <person name="Voytek M.A."/>
        </authorList>
    </citation>
    <scope>NUCLEOTIDE SEQUENCE [LARGE SCALE GENOMIC DNA]</scope>
    <source>
        <strain>Y04AAS1</strain>
    </source>
</reference>
<accession>B4U6K3</accession>
<dbReference type="EC" id="4.1.1.50" evidence="1"/>
<dbReference type="EMBL" id="CP001130">
    <property type="protein sequence ID" value="ACG56771.1"/>
    <property type="molecule type" value="Genomic_DNA"/>
</dbReference>
<dbReference type="RefSeq" id="WP_012513128.1">
    <property type="nucleotide sequence ID" value="NC_011126.1"/>
</dbReference>
<dbReference type="SMR" id="B4U6K3"/>
<dbReference type="STRING" id="380749.HY04AAS1_0079"/>
<dbReference type="KEGG" id="hya:HY04AAS1_0079"/>
<dbReference type="eggNOG" id="COG1586">
    <property type="taxonomic scope" value="Bacteria"/>
</dbReference>
<dbReference type="HOGENOM" id="CLU_125470_2_3_0"/>
<dbReference type="OrthoDB" id="5290709at2"/>
<dbReference type="UniPathway" id="UPA00331">
    <property type="reaction ID" value="UER00451"/>
</dbReference>
<dbReference type="GO" id="GO:0005829">
    <property type="term" value="C:cytosol"/>
    <property type="evidence" value="ECO:0007669"/>
    <property type="project" value="TreeGrafter"/>
</dbReference>
<dbReference type="GO" id="GO:0004014">
    <property type="term" value="F:adenosylmethionine decarboxylase activity"/>
    <property type="evidence" value="ECO:0007669"/>
    <property type="project" value="UniProtKB-UniRule"/>
</dbReference>
<dbReference type="GO" id="GO:0008295">
    <property type="term" value="P:spermidine biosynthetic process"/>
    <property type="evidence" value="ECO:0007669"/>
    <property type="project" value="UniProtKB-UniRule"/>
</dbReference>
<dbReference type="Gene3D" id="3.60.90.10">
    <property type="entry name" value="S-adenosylmethionine decarboxylase"/>
    <property type="match status" value="1"/>
</dbReference>
<dbReference type="HAMAP" id="MF_00464">
    <property type="entry name" value="AdoMetDC_1"/>
    <property type="match status" value="1"/>
</dbReference>
<dbReference type="InterPro" id="IPR003826">
    <property type="entry name" value="AdoMetDC_fam_prok"/>
</dbReference>
<dbReference type="InterPro" id="IPR016067">
    <property type="entry name" value="S-AdoMet_deCO2ase_core"/>
</dbReference>
<dbReference type="InterPro" id="IPR017716">
    <property type="entry name" value="S-AdoMet_deCOase_pro-enz"/>
</dbReference>
<dbReference type="NCBIfam" id="TIGR03330">
    <property type="entry name" value="SAM_DCase_Bsu"/>
    <property type="match status" value="1"/>
</dbReference>
<dbReference type="PANTHER" id="PTHR33866">
    <property type="entry name" value="S-ADENOSYLMETHIONINE DECARBOXYLASE PROENZYME"/>
    <property type="match status" value="1"/>
</dbReference>
<dbReference type="PANTHER" id="PTHR33866:SF2">
    <property type="entry name" value="S-ADENOSYLMETHIONINE DECARBOXYLASE PROENZYME"/>
    <property type="match status" value="1"/>
</dbReference>
<dbReference type="Pfam" id="PF02675">
    <property type="entry name" value="AdoMet_dc"/>
    <property type="match status" value="1"/>
</dbReference>
<dbReference type="SUPFAM" id="SSF56276">
    <property type="entry name" value="S-adenosylmethionine decarboxylase"/>
    <property type="match status" value="1"/>
</dbReference>
<proteinExistence type="inferred from homology"/>
<name>SPEH_HYDS0</name>
<protein>
    <recommendedName>
        <fullName evidence="1">S-adenosylmethionine decarboxylase proenzyme</fullName>
        <shortName evidence="1">AdoMetDC</shortName>
        <shortName evidence="1">SAMDC</shortName>
        <ecNumber evidence="1">4.1.1.50</ecNumber>
    </recommendedName>
    <component>
        <recommendedName>
            <fullName evidence="1">S-adenosylmethionine decarboxylase beta chain</fullName>
        </recommendedName>
    </component>
    <component>
        <recommendedName>
            <fullName evidence="1">S-adenosylmethionine decarboxylase alpha chain</fullName>
        </recommendedName>
    </component>
</protein>
<feature type="chain" id="PRO_1000193191" description="S-adenosylmethionine decarboxylase beta chain" evidence="1">
    <location>
        <begin position="1"/>
        <end position="63"/>
    </location>
</feature>
<feature type="chain" id="PRO_1000193192" description="S-adenosylmethionine decarboxylase alpha chain" evidence="1">
    <location>
        <begin position="64"/>
        <end position="134"/>
    </location>
</feature>
<feature type="active site" description="Schiff-base intermediate with substrate; via pyruvic acid" evidence="1">
    <location>
        <position position="64"/>
    </location>
</feature>
<feature type="active site" description="Proton acceptor; for processing activity" evidence="1">
    <location>
        <position position="69"/>
    </location>
</feature>
<feature type="active site" description="Proton donor; for catalytic activity" evidence="1">
    <location>
        <position position="84"/>
    </location>
</feature>
<feature type="site" description="Cleavage (non-hydrolytic); by autolysis" evidence="1">
    <location>
        <begin position="63"/>
        <end position="64"/>
    </location>
</feature>
<feature type="modified residue" description="Pyruvic acid (Ser); by autocatalysis" evidence="1">
    <location>
        <position position="64"/>
    </location>
</feature>
<organism>
    <name type="scientific">Hydrogenobaculum sp. (strain Y04AAS1)</name>
    <dbReference type="NCBI Taxonomy" id="380749"/>
    <lineage>
        <taxon>Bacteria</taxon>
        <taxon>Pseudomonadati</taxon>
        <taxon>Aquificota</taxon>
        <taxon>Aquificia</taxon>
        <taxon>Aquificales</taxon>
        <taxon>Aquificaceae</taxon>
        <taxon>Hydrogenobaculum</taxon>
    </lineage>
</organism>
<comment type="function">
    <text evidence="1">Catalyzes the decarboxylation of S-adenosylmethionine to S-adenosylmethioninamine (dcAdoMet), the propylamine donor required for the synthesis of the polyamines spermine and spermidine from the diamine putrescine.</text>
</comment>
<comment type="catalytic activity">
    <reaction evidence="1">
        <text>S-adenosyl-L-methionine + H(+) = S-adenosyl 3-(methylsulfanyl)propylamine + CO2</text>
        <dbReference type="Rhea" id="RHEA:15981"/>
        <dbReference type="ChEBI" id="CHEBI:15378"/>
        <dbReference type="ChEBI" id="CHEBI:16526"/>
        <dbReference type="ChEBI" id="CHEBI:57443"/>
        <dbReference type="ChEBI" id="CHEBI:59789"/>
        <dbReference type="EC" id="4.1.1.50"/>
    </reaction>
</comment>
<comment type="cofactor">
    <cofactor evidence="1">
        <name>pyruvate</name>
        <dbReference type="ChEBI" id="CHEBI:15361"/>
    </cofactor>
    <text evidence="1">Binds 1 pyruvoyl group covalently per subunit.</text>
</comment>
<comment type="pathway">
    <text evidence="1">Amine and polyamine biosynthesis; S-adenosylmethioninamine biosynthesis; S-adenosylmethioninamine from S-adenosyl-L-methionine: step 1/1.</text>
</comment>
<comment type="subunit">
    <text evidence="1">Heterotetramer of two alpha and two beta chains arranged as a dimer of alpha/beta heterodimers.</text>
</comment>
<comment type="PTM">
    <text evidence="1">Is synthesized initially as an inactive proenzyme. Formation of the active enzyme involves a self-maturation process in which the active site pyruvoyl group is generated from an internal serine residue via an autocatalytic post-translational modification. Two non-identical subunits are generated from the proenzyme in this reaction, and the pyruvate is formed at the N-terminus of the alpha chain, which is derived from the carboxyl end of the proenzyme. The post-translation cleavage follows an unusual pathway, termed non-hydrolytic serinolysis, in which the side chain hydroxyl group of the serine supplies its oxygen atom to form the C-terminus of the beta chain, while the remainder of the serine residue undergoes an oxidative deamination to produce ammonia and the pyruvoyl group blocking the N-terminus of the alpha chain.</text>
</comment>
<comment type="similarity">
    <text evidence="1">Belongs to the prokaryotic AdoMetDC family. Type 1 subfamily.</text>
</comment>
<sequence length="134" mass="14920">MAKTLGLHIIADLYGVNPDLIDREEDIRHLLENSVKAGELTKISSHFYQFNPHGATGVILLAESHISIHTWPEHKTATVDVFTCGDPSKAYRAMDYIINSLSPTHVDKKVFDRGIIEDSKGKDVLWIMSKAGCC</sequence>